<feature type="chain" id="PRO_1000046937" description="PF03932 family protein CutC">
    <location>
        <begin position="1"/>
        <end position="248"/>
    </location>
</feature>
<sequence>MALLEICCYSMECALTAQQNGADRVELCAAPKEGGLTPSLGVLKSVRQRVTIPVHPIIRPRGGDFCYSDGEFAAILEDVRTVRELGFPGLVTGVLEVDGNVDMPRMEKIMAAAGPLAVTFHRAFDMCANPLNTLNNLTELGITRVLTSGQKSDALQGLSKIMELIAHRDAPIIMAGAGVRAENLHHFLDAGVLEVHSSAGAWQASPMRYRNQGLSMSSDAHADEYLRYVVDGAAVAEMKGIIERHQAK</sequence>
<evidence type="ECO:0000255" key="1">
    <source>
        <dbReference type="HAMAP-Rule" id="MF_00795"/>
    </source>
</evidence>
<organism>
    <name type="scientific">Escherichia coli (strain UTI89 / UPEC)</name>
    <dbReference type="NCBI Taxonomy" id="364106"/>
    <lineage>
        <taxon>Bacteria</taxon>
        <taxon>Pseudomonadati</taxon>
        <taxon>Pseudomonadota</taxon>
        <taxon>Gammaproteobacteria</taxon>
        <taxon>Enterobacterales</taxon>
        <taxon>Enterobacteriaceae</taxon>
        <taxon>Escherichia</taxon>
    </lineage>
</organism>
<name>CUTC_ECOUT</name>
<gene>
    <name evidence="1" type="primary">cutC</name>
    <name type="ordered locus">UTI89_C2078</name>
</gene>
<reference key="1">
    <citation type="journal article" date="2006" name="Proc. Natl. Acad. Sci. U.S.A.">
        <title>Identification of genes subject to positive selection in uropathogenic strains of Escherichia coli: a comparative genomics approach.</title>
        <authorList>
            <person name="Chen S.L."/>
            <person name="Hung C.-S."/>
            <person name="Xu J."/>
            <person name="Reigstad C.S."/>
            <person name="Magrini V."/>
            <person name="Sabo A."/>
            <person name="Blasiar D."/>
            <person name="Bieri T."/>
            <person name="Meyer R.R."/>
            <person name="Ozersky P."/>
            <person name="Armstrong J.R."/>
            <person name="Fulton R.S."/>
            <person name="Latreille J.P."/>
            <person name="Spieth J."/>
            <person name="Hooton T.M."/>
            <person name="Mardis E.R."/>
            <person name="Hultgren S.J."/>
            <person name="Gordon J.I."/>
        </authorList>
    </citation>
    <scope>NUCLEOTIDE SEQUENCE [LARGE SCALE GENOMIC DNA]</scope>
    <source>
        <strain>UTI89 / UPEC</strain>
    </source>
</reference>
<proteinExistence type="inferred from homology"/>
<keyword id="KW-0963">Cytoplasm</keyword>
<accession>Q1RAR0</accession>
<protein>
    <recommendedName>
        <fullName evidence="1">PF03932 family protein CutC</fullName>
    </recommendedName>
</protein>
<dbReference type="EMBL" id="CP000243">
    <property type="protein sequence ID" value="ABE07554.1"/>
    <property type="molecule type" value="Genomic_DNA"/>
</dbReference>
<dbReference type="RefSeq" id="WP_001185753.1">
    <property type="nucleotide sequence ID" value="NZ_CP064825.1"/>
</dbReference>
<dbReference type="SMR" id="Q1RAR0"/>
<dbReference type="KEGG" id="eci:UTI89_C2078"/>
<dbReference type="HOGENOM" id="CLU_050555_3_1_6"/>
<dbReference type="Proteomes" id="UP000001952">
    <property type="component" value="Chromosome"/>
</dbReference>
<dbReference type="GO" id="GO:0005737">
    <property type="term" value="C:cytoplasm"/>
    <property type="evidence" value="ECO:0007669"/>
    <property type="project" value="UniProtKB-SubCell"/>
</dbReference>
<dbReference type="GO" id="GO:0005507">
    <property type="term" value="F:copper ion binding"/>
    <property type="evidence" value="ECO:0007669"/>
    <property type="project" value="TreeGrafter"/>
</dbReference>
<dbReference type="FunFam" id="3.20.20.380:FF:000001">
    <property type="entry name" value="Copper homeostasis protein CutC"/>
    <property type="match status" value="1"/>
</dbReference>
<dbReference type="Gene3D" id="3.20.20.380">
    <property type="entry name" value="Copper homeostasis (CutC) domain"/>
    <property type="match status" value="1"/>
</dbReference>
<dbReference type="HAMAP" id="MF_00795">
    <property type="entry name" value="CutC"/>
    <property type="match status" value="1"/>
</dbReference>
<dbReference type="InterPro" id="IPR005627">
    <property type="entry name" value="CutC-like"/>
</dbReference>
<dbReference type="InterPro" id="IPR036822">
    <property type="entry name" value="CutC-like_dom_sf"/>
</dbReference>
<dbReference type="NCBIfam" id="NF008603">
    <property type="entry name" value="PRK11572.1"/>
    <property type="match status" value="1"/>
</dbReference>
<dbReference type="PANTHER" id="PTHR12598">
    <property type="entry name" value="COPPER HOMEOSTASIS PROTEIN CUTC"/>
    <property type="match status" value="1"/>
</dbReference>
<dbReference type="PANTHER" id="PTHR12598:SF0">
    <property type="entry name" value="COPPER HOMEOSTASIS PROTEIN CUTC HOMOLOG"/>
    <property type="match status" value="1"/>
</dbReference>
<dbReference type="Pfam" id="PF03932">
    <property type="entry name" value="CutC"/>
    <property type="match status" value="1"/>
</dbReference>
<dbReference type="SUPFAM" id="SSF110395">
    <property type="entry name" value="CutC-like"/>
    <property type="match status" value="1"/>
</dbReference>
<comment type="subunit">
    <text evidence="1">Homodimer.</text>
</comment>
<comment type="subcellular location">
    <subcellularLocation>
        <location evidence="1">Cytoplasm</location>
    </subcellularLocation>
</comment>
<comment type="similarity">
    <text evidence="1">Belongs to the CutC family.</text>
</comment>
<comment type="caution">
    <text evidence="1">Once thought to be involved in copper homeostasis, experiments in E.coli have shown this is not the case.</text>
</comment>